<evidence type="ECO:0000255" key="1">
    <source>
        <dbReference type="HAMAP-Rule" id="MF_00365"/>
    </source>
</evidence>
<dbReference type="EMBL" id="AE017262">
    <property type="protein sequence ID" value="AAT02795.1"/>
    <property type="molecule type" value="Genomic_DNA"/>
</dbReference>
<dbReference type="RefSeq" id="WP_003723768.1">
    <property type="nucleotide sequence ID" value="NC_002973.6"/>
</dbReference>
<dbReference type="SMR" id="Q725G6"/>
<dbReference type="KEGG" id="lmf:LMOf2365_0005"/>
<dbReference type="HOGENOM" id="CLU_040267_0_1_9"/>
<dbReference type="GO" id="GO:0005737">
    <property type="term" value="C:cytoplasm"/>
    <property type="evidence" value="ECO:0007669"/>
    <property type="project" value="UniProtKB-SubCell"/>
</dbReference>
<dbReference type="GO" id="GO:0005524">
    <property type="term" value="F:ATP binding"/>
    <property type="evidence" value="ECO:0007669"/>
    <property type="project" value="UniProtKB-UniRule"/>
</dbReference>
<dbReference type="GO" id="GO:0003697">
    <property type="term" value="F:single-stranded DNA binding"/>
    <property type="evidence" value="ECO:0007669"/>
    <property type="project" value="UniProtKB-UniRule"/>
</dbReference>
<dbReference type="GO" id="GO:0006260">
    <property type="term" value="P:DNA replication"/>
    <property type="evidence" value="ECO:0007669"/>
    <property type="project" value="UniProtKB-UniRule"/>
</dbReference>
<dbReference type="GO" id="GO:0000731">
    <property type="term" value="P:DNA synthesis involved in DNA repair"/>
    <property type="evidence" value="ECO:0007669"/>
    <property type="project" value="TreeGrafter"/>
</dbReference>
<dbReference type="GO" id="GO:0006302">
    <property type="term" value="P:double-strand break repair"/>
    <property type="evidence" value="ECO:0007669"/>
    <property type="project" value="TreeGrafter"/>
</dbReference>
<dbReference type="GO" id="GO:0009432">
    <property type="term" value="P:SOS response"/>
    <property type="evidence" value="ECO:0007669"/>
    <property type="project" value="UniProtKB-UniRule"/>
</dbReference>
<dbReference type="CDD" id="cd03242">
    <property type="entry name" value="ABC_RecF"/>
    <property type="match status" value="1"/>
</dbReference>
<dbReference type="FunFam" id="1.20.1050.90:FF:000002">
    <property type="entry name" value="DNA replication and repair protein RecF"/>
    <property type="match status" value="1"/>
</dbReference>
<dbReference type="Gene3D" id="3.40.50.300">
    <property type="entry name" value="P-loop containing nucleotide triphosphate hydrolases"/>
    <property type="match status" value="1"/>
</dbReference>
<dbReference type="Gene3D" id="1.20.1050.90">
    <property type="entry name" value="RecF/RecN/SMC, N-terminal domain"/>
    <property type="match status" value="1"/>
</dbReference>
<dbReference type="HAMAP" id="MF_00365">
    <property type="entry name" value="RecF"/>
    <property type="match status" value="1"/>
</dbReference>
<dbReference type="InterPro" id="IPR001238">
    <property type="entry name" value="DNA-binding_RecF"/>
</dbReference>
<dbReference type="InterPro" id="IPR018078">
    <property type="entry name" value="DNA-binding_RecF_CS"/>
</dbReference>
<dbReference type="InterPro" id="IPR027417">
    <property type="entry name" value="P-loop_NTPase"/>
</dbReference>
<dbReference type="InterPro" id="IPR003395">
    <property type="entry name" value="RecF/RecN/SMC_N"/>
</dbReference>
<dbReference type="InterPro" id="IPR042174">
    <property type="entry name" value="RecF_2"/>
</dbReference>
<dbReference type="NCBIfam" id="TIGR00611">
    <property type="entry name" value="recf"/>
    <property type="match status" value="1"/>
</dbReference>
<dbReference type="PANTHER" id="PTHR32182">
    <property type="entry name" value="DNA REPLICATION AND REPAIR PROTEIN RECF"/>
    <property type="match status" value="1"/>
</dbReference>
<dbReference type="PANTHER" id="PTHR32182:SF0">
    <property type="entry name" value="DNA REPLICATION AND REPAIR PROTEIN RECF"/>
    <property type="match status" value="1"/>
</dbReference>
<dbReference type="Pfam" id="PF02463">
    <property type="entry name" value="SMC_N"/>
    <property type="match status" value="1"/>
</dbReference>
<dbReference type="SUPFAM" id="SSF52540">
    <property type="entry name" value="P-loop containing nucleoside triphosphate hydrolases"/>
    <property type="match status" value="1"/>
</dbReference>
<dbReference type="PROSITE" id="PS00617">
    <property type="entry name" value="RECF_1"/>
    <property type="match status" value="1"/>
</dbReference>
<dbReference type="PROSITE" id="PS00618">
    <property type="entry name" value="RECF_2"/>
    <property type="match status" value="1"/>
</dbReference>
<organism>
    <name type="scientific">Listeria monocytogenes serotype 4b (strain F2365)</name>
    <dbReference type="NCBI Taxonomy" id="265669"/>
    <lineage>
        <taxon>Bacteria</taxon>
        <taxon>Bacillati</taxon>
        <taxon>Bacillota</taxon>
        <taxon>Bacilli</taxon>
        <taxon>Bacillales</taxon>
        <taxon>Listeriaceae</taxon>
        <taxon>Listeria</taxon>
    </lineage>
</organism>
<name>RECF_LISMF</name>
<sequence length="370" mass="42255">MHLESIVLRNFRNYENLELEFSPSVNVFLGENAQGKTNLLEAVLMLALAKSHRTTNDKDFIMWEKEEAKMEGRIAKHGQSVPLELAITQKGKRAKVNHLEQKKLSQYVGNLNVVIFAPEDLSLVKGAPGIRRRFLNMEIGQMQPIYLHNLSEYQRILQQRNQYLKMLQMKRKVDPILLDILTEQFADVAINLTKRRADFIQKLEAYAAPIHHQISRGLETLKIEYKASITLNGDDPEVWKADLLQKMESIKQREIDRGVTLIGPHRDDSLFYINGQNVQDFGSQGQQRTTALSIKLAEIDLIHEETGEYPVLLLDDVLSELDDYRQSHLLGAIEGKVQTFVTTTSTSGIDHETLKQATTFYVEKGTVKKS</sequence>
<feature type="chain" id="PRO_0000196429" description="DNA replication and repair protein RecF">
    <location>
        <begin position="1"/>
        <end position="370"/>
    </location>
</feature>
<feature type="binding site" evidence="1">
    <location>
        <begin position="30"/>
        <end position="37"/>
    </location>
    <ligand>
        <name>ATP</name>
        <dbReference type="ChEBI" id="CHEBI:30616"/>
    </ligand>
</feature>
<accession>Q725G6</accession>
<keyword id="KW-0067">ATP-binding</keyword>
<keyword id="KW-0963">Cytoplasm</keyword>
<keyword id="KW-0227">DNA damage</keyword>
<keyword id="KW-0234">DNA repair</keyword>
<keyword id="KW-0235">DNA replication</keyword>
<keyword id="KW-0238">DNA-binding</keyword>
<keyword id="KW-0547">Nucleotide-binding</keyword>
<keyword id="KW-0742">SOS response</keyword>
<gene>
    <name evidence="1" type="primary">recF</name>
    <name type="ordered locus">LMOf2365_0005</name>
</gene>
<proteinExistence type="inferred from homology"/>
<reference key="1">
    <citation type="journal article" date="2004" name="Nucleic Acids Res.">
        <title>Whole genome comparisons of serotype 4b and 1/2a strains of the food-borne pathogen Listeria monocytogenes reveal new insights into the core genome components of this species.</title>
        <authorList>
            <person name="Nelson K.E."/>
            <person name="Fouts D.E."/>
            <person name="Mongodin E.F."/>
            <person name="Ravel J."/>
            <person name="DeBoy R.T."/>
            <person name="Kolonay J.F."/>
            <person name="Rasko D.A."/>
            <person name="Angiuoli S.V."/>
            <person name="Gill S.R."/>
            <person name="Paulsen I.T."/>
            <person name="Peterson J.D."/>
            <person name="White O."/>
            <person name="Nelson W.C."/>
            <person name="Nierman W.C."/>
            <person name="Beanan M.J."/>
            <person name="Brinkac L.M."/>
            <person name="Daugherty S.C."/>
            <person name="Dodson R.J."/>
            <person name="Durkin A.S."/>
            <person name="Madupu R."/>
            <person name="Haft D.H."/>
            <person name="Selengut J."/>
            <person name="Van Aken S.E."/>
            <person name="Khouri H.M."/>
            <person name="Fedorova N."/>
            <person name="Forberger H.A."/>
            <person name="Tran B."/>
            <person name="Kathariou S."/>
            <person name="Wonderling L.D."/>
            <person name="Uhlich G.A."/>
            <person name="Bayles D.O."/>
            <person name="Luchansky J.B."/>
            <person name="Fraser C.M."/>
        </authorList>
    </citation>
    <scope>NUCLEOTIDE SEQUENCE [LARGE SCALE GENOMIC DNA]</scope>
    <source>
        <strain>F2365</strain>
    </source>
</reference>
<protein>
    <recommendedName>
        <fullName evidence="1">DNA replication and repair protein RecF</fullName>
    </recommendedName>
</protein>
<comment type="function">
    <text evidence="1">The RecF protein is involved in DNA metabolism; it is required for DNA replication and normal SOS inducibility. RecF binds preferentially to single-stranded, linear DNA. It also seems to bind ATP.</text>
</comment>
<comment type="subcellular location">
    <subcellularLocation>
        <location evidence="1">Cytoplasm</location>
    </subcellularLocation>
</comment>
<comment type="similarity">
    <text evidence="1">Belongs to the RecF family.</text>
</comment>